<feature type="chain" id="PRO_0000338462" description="Nuclease SbcCD subunit C">
    <location>
        <begin position="1"/>
        <end position="1009"/>
    </location>
</feature>
<feature type="coiled-coil region" evidence="2">
    <location>
        <begin position="176"/>
        <end position="364"/>
    </location>
</feature>
<feature type="coiled-coil region" evidence="2">
    <location>
        <begin position="401"/>
        <end position="501"/>
    </location>
</feature>
<feature type="coiled-coil region" evidence="2">
    <location>
        <begin position="535"/>
        <end position="805"/>
    </location>
</feature>
<feature type="binding site" evidence="2">
    <location>
        <begin position="34"/>
        <end position="41"/>
    </location>
    <ligand>
        <name>ATP</name>
        <dbReference type="ChEBI" id="CHEBI:30616"/>
    </ligand>
</feature>
<protein>
    <recommendedName>
        <fullName>Nuclease SbcCD subunit C</fullName>
    </recommendedName>
</protein>
<gene>
    <name type="primary">sbcC</name>
    <name type="ordered locus">SaurJH1_1435</name>
</gene>
<comment type="function">
    <text evidence="1">SbcCD cleaves DNA hairpin structures. These structures can inhibit DNA replication and are intermediates in certain DNA recombination reactions. The complex acts as a 3'-&gt;5' double strand exonuclease that can open hairpins. It also has a 5' single-strand endonuclease activity (By similarity).</text>
</comment>
<comment type="subunit">
    <text evidence="1">Heterodimer of SbcC and SbcD.</text>
</comment>
<comment type="similarity">
    <text evidence="3">Belongs to the SMC family. SbcC subfamily.</text>
</comment>
<evidence type="ECO:0000250" key="1"/>
<evidence type="ECO:0000255" key="2"/>
<evidence type="ECO:0000305" key="3"/>
<reference key="1">
    <citation type="submission" date="2007-06" db="EMBL/GenBank/DDBJ databases">
        <title>Complete sequence of chromosome of Staphylococcus aureus subsp. aureus JH1.</title>
        <authorList>
            <consortium name="US DOE Joint Genome Institute"/>
            <person name="Copeland A."/>
            <person name="Lucas S."/>
            <person name="Lapidus A."/>
            <person name="Barry K."/>
            <person name="Detter J.C."/>
            <person name="Glavina del Rio T."/>
            <person name="Hammon N."/>
            <person name="Israni S."/>
            <person name="Dalin E."/>
            <person name="Tice H."/>
            <person name="Pitluck S."/>
            <person name="Chain P."/>
            <person name="Malfatti S."/>
            <person name="Shin M."/>
            <person name="Vergez L."/>
            <person name="Schmutz J."/>
            <person name="Larimer F."/>
            <person name="Land M."/>
            <person name="Hauser L."/>
            <person name="Kyrpides N."/>
            <person name="Ivanova N."/>
            <person name="Tomasz A."/>
            <person name="Richardson P."/>
        </authorList>
    </citation>
    <scope>NUCLEOTIDE SEQUENCE [LARGE SCALE GENOMIC DNA]</scope>
    <source>
        <strain>JH1</strain>
    </source>
</reference>
<keyword id="KW-0067">ATP-binding</keyword>
<keyword id="KW-0175">Coiled coil</keyword>
<keyword id="KW-0233">DNA recombination</keyword>
<keyword id="KW-0235">DNA replication</keyword>
<keyword id="KW-0255">Endonuclease</keyword>
<keyword id="KW-0269">Exonuclease</keyword>
<keyword id="KW-0378">Hydrolase</keyword>
<keyword id="KW-0540">Nuclease</keyword>
<keyword id="KW-0547">Nucleotide-binding</keyword>
<accession>A6U1G7</accession>
<name>SBCC_STAA2</name>
<proteinExistence type="inferred from homology"/>
<sequence length="1009" mass="117482">MKPLHLKLNNFGPFLKEEIDFSKIDNNELFLISGKTGSGKTMIFDAMTYALFGKASTEQREENDLRSHFADGKQPMSVTFEFQLNHRIYKVHRQGPYIKEGNTTKTNAKFDVFEMVDGKYEIRESKVISGTQFIIELLGVNADQFRQLFILPQGEFKRFLISNSREKQGILRTLFDSEKFEAIREILKEELKKEKAQIENRYQQIDLLWQEIESFDDDKIKGLLELATQQIDKLIENIPLLQARSKEILAFVNESKETAIKEYEIIEKKTLENNILKDNINQLNKNKIDFVQLKEQQPEIDEIEAKLKLLQDITNLLNYIENREKIETKIANSKKDISKTNNKILNLDCDKRNIDKEKKMLEENGDLIESKTSFIDKTRVLFNDINKYQQSYLNIECLITEGEQLGDELNNLIKGLEKVEDSIGNNESDYEKIIELNNAITNINNEINIIKENEKAKAELDKLLGSKQELENQINEETTIMKNLEIKLDHYDKSKLDLNDKESFISEIKSAVKIGDQCPICGNEIQDLGHHIDFDSIAKRQNEIKEIEANIHAIKSNIAVHNSEIKFVNEKISNINIKTQSDFSLEVLNKRLLENENALNNQRDLNKFIEQMKEEKDNLTLQIHNKQLRLNKNESELKLCRDLITEFETLSKYNNITNFEVDYKKYVQDVNQHQELSKEIEDKLMQLSQRKLIEQNNLNHYENQLETYNNDLELNEQSIEMEMSRLNLTDDNDINEIIAWRGEQEELEQKRDTYKKRYHEFEMEIARLESLTKDKELLDSDKLKDEYEQKKEKMNTLIDEYSAVHYQCQNNINKTQSIVSHINYLNQELKDQQEIFQLAEIVSGKNNKNLTLENFVLIYYLDQIIAQANLRLATMSDNRYQLIRREAVSHGLSGLEIDVFDLHSNKSRHISSLSGGETFQSSLALALGLSEIVQQQSGGISLESIFIDEGFGTLDQETLETALDTLLNLKSTGRMVGIISHVSELKNRIPLVLEVKSDQYQSSTRFKRN</sequence>
<organism>
    <name type="scientific">Staphylococcus aureus (strain JH1)</name>
    <dbReference type="NCBI Taxonomy" id="359787"/>
    <lineage>
        <taxon>Bacteria</taxon>
        <taxon>Bacillati</taxon>
        <taxon>Bacillota</taxon>
        <taxon>Bacilli</taxon>
        <taxon>Bacillales</taxon>
        <taxon>Staphylococcaceae</taxon>
        <taxon>Staphylococcus</taxon>
    </lineage>
</organism>
<dbReference type="EMBL" id="CP000736">
    <property type="protein sequence ID" value="ABR52285.1"/>
    <property type="molecule type" value="Genomic_DNA"/>
</dbReference>
<dbReference type="SMR" id="A6U1G7"/>
<dbReference type="KEGG" id="sah:SaurJH1_1435"/>
<dbReference type="HOGENOM" id="CLU_004785_2_1_9"/>
<dbReference type="GO" id="GO:0005524">
    <property type="term" value="F:ATP binding"/>
    <property type="evidence" value="ECO:0007669"/>
    <property type="project" value="UniProtKB-KW"/>
</dbReference>
<dbReference type="GO" id="GO:0016887">
    <property type="term" value="F:ATP hydrolysis activity"/>
    <property type="evidence" value="ECO:0007669"/>
    <property type="project" value="InterPro"/>
</dbReference>
<dbReference type="GO" id="GO:0004519">
    <property type="term" value="F:endonuclease activity"/>
    <property type="evidence" value="ECO:0007669"/>
    <property type="project" value="UniProtKB-KW"/>
</dbReference>
<dbReference type="GO" id="GO:0004527">
    <property type="term" value="F:exonuclease activity"/>
    <property type="evidence" value="ECO:0007669"/>
    <property type="project" value="UniProtKB-KW"/>
</dbReference>
<dbReference type="GO" id="GO:0006310">
    <property type="term" value="P:DNA recombination"/>
    <property type="evidence" value="ECO:0007669"/>
    <property type="project" value="UniProtKB-KW"/>
</dbReference>
<dbReference type="GO" id="GO:0006260">
    <property type="term" value="P:DNA replication"/>
    <property type="evidence" value="ECO:0007669"/>
    <property type="project" value="UniProtKB-KW"/>
</dbReference>
<dbReference type="GO" id="GO:0006302">
    <property type="term" value="P:double-strand break repair"/>
    <property type="evidence" value="ECO:0007669"/>
    <property type="project" value="InterPro"/>
</dbReference>
<dbReference type="CDD" id="cd03279">
    <property type="entry name" value="ABC_sbcCD"/>
    <property type="match status" value="1"/>
</dbReference>
<dbReference type="Gene3D" id="3.40.50.300">
    <property type="entry name" value="P-loop containing nucleotide triphosphate hydrolases"/>
    <property type="match status" value="2"/>
</dbReference>
<dbReference type="InterPro" id="IPR027417">
    <property type="entry name" value="P-loop_NTPase"/>
</dbReference>
<dbReference type="InterPro" id="IPR038729">
    <property type="entry name" value="Rad50/SbcC_AAA"/>
</dbReference>
<dbReference type="InterPro" id="IPR053380">
    <property type="entry name" value="SbcCD_Nuclease_C"/>
</dbReference>
<dbReference type="NCBIfam" id="NF041751">
    <property type="entry name" value="sbcc_Staph"/>
    <property type="match status" value="1"/>
</dbReference>
<dbReference type="PANTHER" id="PTHR32114">
    <property type="entry name" value="ABC TRANSPORTER ABCH.3"/>
    <property type="match status" value="1"/>
</dbReference>
<dbReference type="PANTHER" id="PTHR32114:SF2">
    <property type="entry name" value="ABC TRANSPORTER ABCH.3"/>
    <property type="match status" value="1"/>
</dbReference>
<dbReference type="Pfam" id="PF13476">
    <property type="entry name" value="AAA_23"/>
    <property type="match status" value="1"/>
</dbReference>
<dbReference type="Pfam" id="PF13558">
    <property type="entry name" value="SbcC_Walker_B"/>
    <property type="match status" value="1"/>
</dbReference>
<dbReference type="SUPFAM" id="SSF52540">
    <property type="entry name" value="P-loop containing nucleoside triphosphate hydrolases"/>
    <property type="match status" value="2"/>
</dbReference>
<dbReference type="SUPFAM" id="SSF75712">
    <property type="entry name" value="Rad50 coiled-coil Zn hook"/>
    <property type="match status" value="1"/>
</dbReference>